<keyword id="KW-1185">Reference proteome</keyword>
<proteinExistence type="predicted"/>
<dbReference type="EMBL" id="L77117">
    <property type="protein sequence ID" value="AAB99386.1"/>
    <property type="molecule type" value="Genomic_DNA"/>
</dbReference>
<dbReference type="PIR" id="H64470">
    <property type="entry name" value="H64470"/>
</dbReference>
<dbReference type="SMR" id="Q58764"/>
<dbReference type="STRING" id="243232.MJ_1369"/>
<dbReference type="PaxDb" id="243232-MJ_1369"/>
<dbReference type="EnsemblBacteria" id="AAB99386">
    <property type="protein sequence ID" value="AAB99386"/>
    <property type="gene ID" value="MJ_1369"/>
</dbReference>
<dbReference type="KEGG" id="mja:MJ_1369"/>
<dbReference type="eggNOG" id="arCOG02727">
    <property type="taxonomic scope" value="Archaea"/>
</dbReference>
<dbReference type="HOGENOM" id="CLU_1691555_0_0_2"/>
<dbReference type="InParanoid" id="Q58764"/>
<dbReference type="Proteomes" id="UP000000805">
    <property type="component" value="Chromosome"/>
</dbReference>
<dbReference type="Gene3D" id="3.10.590.10">
    <property type="entry name" value="ph1033 like domains"/>
    <property type="match status" value="1"/>
</dbReference>
<dbReference type="InterPro" id="IPR015947">
    <property type="entry name" value="PUA-like_sf"/>
</dbReference>
<dbReference type="SUPFAM" id="SSF88697">
    <property type="entry name" value="PUA domain-like"/>
    <property type="match status" value="1"/>
</dbReference>
<organism>
    <name type="scientific">Methanocaldococcus jannaschii (strain ATCC 43067 / DSM 2661 / JAL-1 / JCM 10045 / NBRC 100440)</name>
    <name type="common">Methanococcus jannaschii</name>
    <dbReference type="NCBI Taxonomy" id="243232"/>
    <lineage>
        <taxon>Archaea</taxon>
        <taxon>Methanobacteriati</taxon>
        <taxon>Methanobacteriota</taxon>
        <taxon>Methanomada group</taxon>
        <taxon>Methanococci</taxon>
        <taxon>Methanococcales</taxon>
        <taxon>Methanocaldococcaceae</taxon>
        <taxon>Methanocaldococcus</taxon>
    </lineage>
</organism>
<sequence length="155" mass="18595">MRDIVMTYWLFSSNNIRNIEICYNHMIWGFWDRNAGEKQKKNWRSFIRKYNQIKPFDVAVFQIAKTGEIHAIGVIKETYYDDQTPIWDNEINLNKVTFPWRVSFSVIIFSKEAVIKRFIKIQDYIDGYGLGELEHHDFNEILKAFQKKFGMISIK</sequence>
<protein>
    <recommendedName>
        <fullName>Uncharacterized protein MJ1369</fullName>
    </recommendedName>
</protein>
<name>Y1369_METJA</name>
<feature type="chain" id="PRO_0000107301" description="Uncharacterized protein MJ1369">
    <location>
        <begin position="1"/>
        <end position="155"/>
    </location>
</feature>
<accession>Q58764</accession>
<gene>
    <name type="ordered locus">MJ1369</name>
</gene>
<reference key="1">
    <citation type="journal article" date="1996" name="Science">
        <title>Complete genome sequence of the methanogenic archaeon, Methanococcus jannaschii.</title>
        <authorList>
            <person name="Bult C.J."/>
            <person name="White O."/>
            <person name="Olsen G.J."/>
            <person name="Zhou L."/>
            <person name="Fleischmann R.D."/>
            <person name="Sutton G.G."/>
            <person name="Blake J.A."/>
            <person name="FitzGerald L.M."/>
            <person name="Clayton R.A."/>
            <person name="Gocayne J.D."/>
            <person name="Kerlavage A.R."/>
            <person name="Dougherty B.A."/>
            <person name="Tomb J.-F."/>
            <person name="Adams M.D."/>
            <person name="Reich C.I."/>
            <person name="Overbeek R."/>
            <person name="Kirkness E.F."/>
            <person name="Weinstock K.G."/>
            <person name="Merrick J.M."/>
            <person name="Glodek A."/>
            <person name="Scott J.L."/>
            <person name="Geoghagen N.S.M."/>
            <person name="Weidman J.F."/>
            <person name="Fuhrmann J.L."/>
            <person name="Nguyen D."/>
            <person name="Utterback T.R."/>
            <person name="Kelley J.M."/>
            <person name="Peterson J.D."/>
            <person name="Sadow P.W."/>
            <person name="Hanna M.C."/>
            <person name="Cotton M.D."/>
            <person name="Roberts K.M."/>
            <person name="Hurst M.A."/>
            <person name="Kaine B.P."/>
            <person name="Borodovsky M."/>
            <person name="Klenk H.-P."/>
            <person name="Fraser C.M."/>
            <person name="Smith H.O."/>
            <person name="Woese C.R."/>
            <person name="Venter J.C."/>
        </authorList>
    </citation>
    <scope>NUCLEOTIDE SEQUENCE [LARGE SCALE GENOMIC DNA]</scope>
    <source>
        <strain>ATCC 43067 / DSM 2661 / JAL-1 / JCM 10045 / NBRC 100440</strain>
    </source>
</reference>